<feature type="chain" id="PRO_0000417397" description="Molybdate transporter 2">
    <location>
        <begin position="1"/>
        <end position="464"/>
    </location>
</feature>
<feature type="transmembrane region" description="Helical" evidence="1">
    <location>
        <begin position="33"/>
        <end position="53"/>
    </location>
</feature>
<feature type="transmembrane region" description="Helical" evidence="1">
    <location>
        <begin position="62"/>
        <end position="82"/>
    </location>
</feature>
<feature type="transmembrane region" description="Helical" evidence="1">
    <location>
        <begin position="116"/>
        <end position="136"/>
    </location>
</feature>
<feature type="transmembrane region" description="Helical" evidence="1">
    <location>
        <begin position="172"/>
        <end position="192"/>
    </location>
</feature>
<feature type="transmembrane region" description="Helical" evidence="1">
    <location>
        <begin position="223"/>
        <end position="243"/>
    </location>
</feature>
<feature type="transmembrane region" description="Helical" evidence="1">
    <location>
        <begin position="309"/>
        <end position="329"/>
    </location>
</feature>
<feature type="transmembrane region" description="Helical" evidence="1">
    <location>
        <begin position="348"/>
        <end position="368"/>
    </location>
</feature>
<feature type="transmembrane region" description="Helical" evidence="1">
    <location>
        <begin position="374"/>
        <end position="394"/>
    </location>
</feature>
<feature type="transmembrane region" description="Helical" evidence="1">
    <location>
        <begin position="404"/>
        <end position="424"/>
    </location>
</feature>
<feature type="short sequence motif" description="Tonoplast targeting signal">
    <location>
        <begin position="8"/>
        <end position="9"/>
    </location>
</feature>
<feature type="splice variant" id="VSP_043684" description="In isoform 2." evidence="4">
    <location>
        <begin position="43"/>
        <end position="129"/>
    </location>
</feature>
<feature type="mutagenesis site" description="Loss of vacuolar localization." evidence="3">
    <original>LL</original>
    <variation>AA</variation>
    <location>
        <begin position="8"/>
        <end position="9"/>
    </location>
</feature>
<feature type="sequence conflict" description="In Ref. 4; BAF01113." evidence="5" ref="4">
    <original>V</original>
    <variation>A</variation>
    <location>
        <position position="135"/>
    </location>
</feature>
<accession>Q0WP36</accession>
<accession>C0Z3C0</accession>
<accession>Q9C973</accession>
<name>MOT2_ARATH</name>
<proteinExistence type="evidence at protein level"/>
<protein>
    <recommendedName>
        <fullName>Molybdate transporter 2</fullName>
    </recommendedName>
    <alternativeName>
        <fullName>Sulfate transporter like protein 5.1</fullName>
    </alternativeName>
</protein>
<sequence>METTTTPLLPGDRSRCGWLRRRLRLKNPLSSELSGAVGDLGTFIPIVLTLTLVSNLDLSTTLIFTGFYNIATGLLFDIPMPVQPMKSIAAVAVSESPHLTPSQIAAAGASTAATLLLLGATGAMSFLYNIIPLPVVRGVQLSQGLQFAFTAIKYVRFNYDTATLKPSSSPRIWLGLDGLILALAALLFIILSTGSGNDREAEDGDLAETSSNESQSRRRRLRLLSSIPSALIVFALGLVLCFIRDPSIFKDLKFGPSKFHILRISWDDWKIGFLRAAIPQIPLSVLNSVIAVCKLSNDLFDKELSATTVSISVGVMNLIGCWFGAMPVCHGAGGLAGQYRFGARSGLSVIFLGIGKLIVGLVFGNSFVRILSQFPIGILGVLLLFAGIELAMASKDMNSKEDSFIMLVCAAVSMTGSSAALGFGCGVVLYLLLKLRTLDCSSVTLFSRSSDESQVDSEAAPRDV</sequence>
<organism>
    <name type="scientific">Arabidopsis thaliana</name>
    <name type="common">Mouse-ear cress</name>
    <dbReference type="NCBI Taxonomy" id="3702"/>
    <lineage>
        <taxon>Eukaryota</taxon>
        <taxon>Viridiplantae</taxon>
        <taxon>Streptophyta</taxon>
        <taxon>Embryophyta</taxon>
        <taxon>Tracheophyta</taxon>
        <taxon>Spermatophyta</taxon>
        <taxon>Magnoliopsida</taxon>
        <taxon>eudicotyledons</taxon>
        <taxon>Gunneridae</taxon>
        <taxon>Pentapetalae</taxon>
        <taxon>rosids</taxon>
        <taxon>malvids</taxon>
        <taxon>Brassicales</taxon>
        <taxon>Brassicaceae</taxon>
        <taxon>Camelineae</taxon>
        <taxon>Arabidopsis</taxon>
    </lineage>
</organism>
<reference key="1">
    <citation type="journal article" date="2000" name="Nature">
        <title>Sequence and analysis of chromosome 1 of the plant Arabidopsis thaliana.</title>
        <authorList>
            <person name="Theologis A."/>
            <person name="Ecker J.R."/>
            <person name="Palm C.J."/>
            <person name="Federspiel N.A."/>
            <person name="Kaul S."/>
            <person name="White O."/>
            <person name="Alonso J."/>
            <person name="Altafi H."/>
            <person name="Araujo R."/>
            <person name="Bowman C.L."/>
            <person name="Brooks S.Y."/>
            <person name="Buehler E."/>
            <person name="Chan A."/>
            <person name="Chao Q."/>
            <person name="Chen H."/>
            <person name="Cheuk R.F."/>
            <person name="Chin C.W."/>
            <person name="Chung M.K."/>
            <person name="Conn L."/>
            <person name="Conway A.B."/>
            <person name="Conway A.R."/>
            <person name="Creasy T.H."/>
            <person name="Dewar K."/>
            <person name="Dunn P."/>
            <person name="Etgu P."/>
            <person name="Feldblyum T.V."/>
            <person name="Feng J.-D."/>
            <person name="Fong B."/>
            <person name="Fujii C.Y."/>
            <person name="Gill J.E."/>
            <person name="Goldsmith A.D."/>
            <person name="Haas B."/>
            <person name="Hansen N.F."/>
            <person name="Hughes B."/>
            <person name="Huizar L."/>
            <person name="Hunter J.L."/>
            <person name="Jenkins J."/>
            <person name="Johnson-Hopson C."/>
            <person name="Khan S."/>
            <person name="Khaykin E."/>
            <person name="Kim C.J."/>
            <person name="Koo H.L."/>
            <person name="Kremenetskaia I."/>
            <person name="Kurtz D.B."/>
            <person name="Kwan A."/>
            <person name="Lam B."/>
            <person name="Langin-Hooper S."/>
            <person name="Lee A."/>
            <person name="Lee J.M."/>
            <person name="Lenz C.A."/>
            <person name="Li J.H."/>
            <person name="Li Y.-P."/>
            <person name="Lin X."/>
            <person name="Liu S.X."/>
            <person name="Liu Z.A."/>
            <person name="Luros J.S."/>
            <person name="Maiti R."/>
            <person name="Marziali A."/>
            <person name="Militscher J."/>
            <person name="Miranda M."/>
            <person name="Nguyen M."/>
            <person name="Nierman W.C."/>
            <person name="Osborne B.I."/>
            <person name="Pai G."/>
            <person name="Peterson J."/>
            <person name="Pham P.K."/>
            <person name="Rizzo M."/>
            <person name="Rooney T."/>
            <person name="Rowley D."/>
            <person name="Sakano H."/>
            <person name="Salzberg S.L."/>
            <person name="Schwartz J.R."/>
            <person name="Shinn P."/>
            <person name="Southwick A.M."/>
            <person name="Sun H."/>
            <person name="Tallon L.J."/>
            <person name="Tambunga G."/>
            <person name="Toriumi M.J."/>
            <person name="Town C.D."/>
            <person name="Utterback T."/>
            <person name="Van Aken S."/>
            <person name="Vaysberg M."/>
            <person name="Vysotskaia V.S."/>
            <person name="Walker M."/>
            <person name="Wu D."/>
            <person name="Yu G."/>
            <person name="Fraser C.M."/>
            <person name="Venter J.C."/>
            <person name="Davis R.W."/>
        </authorList>
    </citation>
    <scope>NUCLEOTIDE SEQUENCE [LARGE SCALE GENOMIC DNA]</scope>
    <source>
        <strain>cv. Columbia</strain>
    </source>
</reference>
<reference key="2">
    <citation type="journal article" date="2017" name="Plant J.">
        <title>Araport11: a complete reannotation of the Arabidopsis thaliana reference genome.</title>
        <authorList>
            <person name="Cheng C.Y."/>
            <person name="Krishnakumar V."/>
            <person name="Chan A.P."/>
            <person name="Thibaud-Nissen F."/>
            <person name="Schobel S."/>
            <person name="Town C.D."/>
        </authorList>
    </citation>
    <scope>GENOME REANNOTATION</scope>
    <source>
        <strain>cv. Columbia</strain>
    </source>
</reference>
<reference key="3">
    <citation type="journal article" date="2003" name="Science">
        <title>Empirical analysis of transcriptional activity in the Arabidopsis genome.</title>
        <authorList>
            <person name="Yamada K."/>
            <person name="Lim J."/>
            <person name="Dale J.M."/>
            <person name="Chen H."/>
            <person name="Shinn P."/>
            <person name="Palm C.J."/>
            <person name="Southwick A.M."/>
            <person name="Wu H.C."/>
            <person name="Kim C.J."/>
            <person name="Nguyen M."/>
            <person name="Pham P.K."/>
            <person name="Cheuk R.F."/>
            <person name="Karlin-Newmann G."/>
            <person name="Liu S.X."/>
            <person name="Lam B."/>
            <person name="Sakano H."/>
            <person name="Wu T."/>
            <person name="Yu G."/>
            <person name="Miranda M."/>
            <person name="Quach H.L."/>
            <person name="Tripp M."/>
            <person name="Chang C.H."/>
            <person name="Lee J.M."/>
            <person name="Toriumi M.J."/>
            <person name="Chan M.M."/>
            <person name="Tang C.C."/>
            <person name="Onodera C.S."/>
            <person name="Deng J.M."/>
            <person name="Akiyama K."/>
            <person name="Ansari Y."/>
            <person name="Arakawa T."/>
            <person name="Banh J."/>
            <person name="Banno F."/>
            <person name="Bowser L."/>
            <person name="Brooks S.Y."/>
            <person name="Carninci P."/>
            <person name="Chao Q."/>
            <person name="Choy N."/>
            <person name="Enju A."/>
            <person name="Goldsmith A.D."/>
            <person name="Gurjal M."/>
            <person name="Hansen N.F."/>
            <person name="Hayashizaki Y."/>
            <person name="Johnson-Hopson C."/>
            <person name="Hsuan V.W."/>
            <person name="Iida K."/>
            <person name="Karnes M."/>
            <person name="Khan S."/>
            <person name="Koesema E."/>
            <person name="Ishida J."/>
            <person name="Jiang P.X."/>
            <person name="Jones T."/>
            <person name="Kawai J."/>
            <person name="Kamiya A."/>
            <person name="Meyers C."/>
            <person name="Nakajima M."/>
            <person name="Narusaka M."/>
            <person name="Seki M."/>
            <person name="Sakurai T."/>
            <person name="Satou M."/>
            <person name="Tamse R."/>
            <person name="Vaysberg M."/>
            <person name="Wallender E.K."/>
            <person name="Wong C."/>
            <person name="Yamamura Y."/>
            <person name="Yuan S."/>
            <person name="Shinozaki K."/>
            <person name="Davis R.W."/>
            <person name="Theologis A."/>
            <person name="Ecker J.R."/>
        </authorList>
    </citation>
    <scope>NUCLEOTIDE SEQUENCE [LARGE SCALE MRNA] (ISOFORM 1)</scope>
    <source>
        <strain>cv. Columbia</strain>
    </source>
</reference>
<reference key="4">
    <citation type="submission" date="2006-07" db="EMBL/GenBank/DDBJ databases">
        <title>Large-scale analysis of RIKEN Arabidopsis full-length (RAFL) cDNAs.</title>
        <authorList>
            <person name="Totoki Y."/>
            <person name="Seki M."/>
            <person name="Ishida J."/>
            <person name="Nakajima M."/>
            <person name="Enju A."/>
            <person name="Kamiya A."/>
            <person name="Narusaka M."/>
            <person name="Shin-i T."/>
            <person name="Nakagawa M."/>
            <person name="Sakamoto N."/>
            <person name="Oishi K."/>
            <person name="Kohara Y."/>
            <person name="Kobayashi M."/>
            <person name="Toyoda A."/>
            <person name="Sakaki Y."/>
            <person name="Sakurai T."/>
            <person name="Iida K."/>
            <person name="Akiyama K."/>
            <person name="Satou M."/>
            <person name="Toyoda T."/>
            <person name="Konagaya A."/>
            <person name="Carninci P."/>
            <person name="Kawai J."/>
            <person name="Hayashizaki Y."/>
            <person name="Shinozaki K."/>
        </authorList>
    </citation>
    <scope>NUCLEOTIDE SEQUENCE [LARGE SCALE MRNA] (ISOFORM 1)</scope>
    <source>
        <strain>cv. Columbia</strain>
    </source>
</reference>
<reference key="5">
    <citation type="journal article" date="2009" name="DNA Res.">
        <title>Analysis of multiple occurrences of alternative splicing events in Arabidopsis thaliana using novel sequenced full-length cDNAs.</title>
        <authorList>
            <person name="Iida K."/>
            <person name="Fukami-Kobayashi K."/>
            <person name="Toyoda A."/>
            <person name="Sakaki Y."/>
            <person name="Kobayashi M."/>
            <person name="Seki M."/>
            <person name="Shinozaki K."/>
        </authorList>
    </citation>
    <scope>NUCLEOTIDE SEQUENCE [LARGE SCALE MRNA] (ISOFORM 2)</scope>
    <source>
        <strain>cv. Columbia</strain>
    </source>
</reference>
<reference key="6">
    <citation type="submission" date="2002-03" db="EMBL/GenBank/DDBJ databases">
        <title>Full-length cDNA from Arabidopsis thaliana.</title>
        <authorList>
            <person name="Brover V.V."/>
            <person name="Troukhan M.E."/>
            <person name="Alexandrov N.A."/>
            <person name="Lu Y.-P."/>
            <person name="Flavell R.B."/>
            <person name="Feldmann K.A."/>
        </authorList>
    </citation>
    <scope>NUCLEOTIDE SEQUENCE [LARGE SCALE MRNA] (ISOFORM 1)</scope>
</reference>
<reference key="7">
    <citation type="journal article" date="2011" name="J. Exp. Bot.">
        <title>Effects of molybdenum deficiency and defects in molybdate transporter MOT1 on transcript accumulation and nitrogen/sulphur metabolism in Arabidopsis thaliana.</title>
        <authorList>
            <person name="Ide Y."/>
            <person name="Kusano M."/>
            <person name="Oikawa A."/>
            <person name="Fukushima A."/>
            <person name="Tomatsu H."/>
            <person name="Saito K."/>
            <person name="Hirai M.Y."/>
            <person name="Fujiwara T."/>
        </authorList>
    </citation>
    <scope>FUNCTION</scope>
    <scope>DISRUPTION PHENOTYPE</scope>
    <source>
        <strain>cv. Columbia</strain>
    </source>
</reference>
<reference key="8">
    <citation type="journal article" date="2011" name="Plant Biol.">
        <title>Identification of an Arabidopsis solute carrier critical for intracellular transport and inter-organ allocation of molybdate.</title>
        <authorList>
            <person name="Gasber A."/>
            <person name="Klaumann S."/>
            <person name="Trentmann O."/>
            <person name="Trampczynska A."/>
            <person name="Clemens S."/>
            <person name="Schneider S."/>
            <person name="Sauer N."/>
            <person name="Feifer I."/>
            <person name="Bittner F."/>
            <person name="Mendel R.R."/>
            <person name="Neuhaus H.E."/>
        </authorList>
    </citation>
    <scope>FUNCTION</scope>
    <scope>SUBCELLULAR LOCATION</scope>
    <scope>MUTAGENESIS OF 8-LEU-LEU-9</scope>
    <scope>DISRUPTION PHENOTYPE</scope>
    <scope>DEVELOPMENTAL STAGE</scope>
</reference>
<comment type="function">
    <text evidence="2 3">Molybdate transporter required for vacuolar molybdate export during senescence.</text>
</comment>
<comment type="subcellular location">
    <subcellularLocation>
        <location evidence="3">Vacuole membrane</location>
        <topology evidence="3">Multi-pass membrane protein</topology>
    </subcellularLocation>
</comment>
<comment type="alternative products">
    <event type="alternative splicing"/>
    <isoform>
        <id>Q0WP36-1</id>
        <name>1</name>
        <sequence type="displayed"/>
    </isoform>
    <isoform>
        <id>Q0WP36-2</id>
        <name>2</name>
        <sequence type="described" ref="VSP_043684"/>
    </isoform>
</comment>
<comment type="tissue specificity">
    <text>Expressed in leaves. Not detected in roots, shoots and seeds.</text>
</comment>
<comment type="developmental stage">
    <text evidence="3">Up-regulated in senescing leaves.</text>
</comment>
<comment type="disruption phenotype">
    <text evidence="2 3">No visible phenotype and no effect on molybdate content in shoots when grown in soil, but increased levels in leaves and decreased levels in seeds.</text>
</comment>
<comment type="miscellaneous">
    <text>About 80% of the leaf molybdate is exported during senescence.</text>
</comment>
<comment type="similarity">
    <text evidence="5">Belongs to the SLC26A/SulP transporter (TC 2.A.53) family.</text>
</comment>
<dbReference type="EMBL" id="AC018848">
    <property type="protein sequence ID" value="AAG52436.1"/>
    <property type="molecule type" value="Genomic_DNA"/>
</dbReference>
<dbReference type="EMBL" id="CP002684">
    <property type="protein sequence ID" value="AEE36386.1"/>
    <property type="molecule type" value="Genomic_DNA"/>
</dbReference>
<dbReference type="EMBL" id="AY064056">
    <property type="protein sequence ID" value="AAL36412.1"/>
    <property type="molecule type" value="mRNA"/>
</dbReference>
<dbReference type="EMBL" id="BT008582">
    <property type="protein sequence ID" value="AAP40409.1"/>
    <property type="molecule type" value="mRNA"/>
</dbReference>
<dbReference type="EMBL" id="AK229248">
    <property type="protein sequence ID" value="BAF01113.1"/>
    <property type="molecule type" value="mRNA"/>
</dbReference>
<dbReference type="EMBL" id="AK319084">
    <property type="protein sequence ID" value="BAH57199.1"/>
    <property type="molecule type" value="mRNA"/>
</dbReference>
<dbReference type="EMBL" id="AY084878">
    <property type="protein sequence ID" value="AAM61441.1"/>
    <property type="molecule type" value="mRNA"/>
</dbReference>
<dbReference type="PIR" id="F96834">
    <property type="entry name" value="F96834"/>
</dbReference>
<dbReference type="RefSeq" id="NP_178147.1">
    <molecule id="Q0WP36-1"/>
    <property type="nucleotide sequence ID" value="NM_106680.3"/>
</dbReference>
<dbReference type="SMR" id="Q0WP36"/>
<dbReference type="STRING" id="3702.Q0WP36"/>
<dbReference type="TCDB" id="2.A.53.5.3">
    <property type="family name" value="the sulfate permease (sulp) family"/>
</dbReference>
<dbReference type="SwissPalm" id="Q0WP36"/>
<dbReference type="PaxDb" id="3702-AT1G80310.1"/>
<dbReference type="ProteomicsDB" id="239063">
    <molecule id="Q0WP36-1"/>
</dbReference>
<dbReference type="EnsemblPlants" id="AT1G80310.1">
    <molecule id="Q0WP36-1"/>
    <property type="protein sequence ID" value="AT1G80310.1"/>
    <property type="gene ID" value="AT1G80310"/>
</dbReference>
<dbReference type="GeneID" id="844371"/>
<dbReference type="Gramene" id="AT1G80310.1">
    <molecule id="Q0WP36-1"/>
    <property type="protein sequence ID" value="AT1G80310.1"/>
    <property type="gene ID" value="AT1G80310"/>
</dbReference>
<dbReference type="KEGG" id="ath:AT1G80310"/>
<dbReference type="Araport" id="AT1G80310"/>
<dbReference type="TAIR" id="AT1G80310">
    <property type="gene designation" value="MOT2"/>
</dbReference>
<dbReference type="eggNOG" id="ENOG502QRGR">
    <property type="taxonomic scope" value="Eukaryota"/>
</dbReference>
<dbReference type="HOGENOM" id="CLU_032158_0_1_1"/>
<dbReference type="InParanoid" id="Q0WP36"/>
<dbReference type="OMA" id="GSMPVCH"/>
<dbReference type="OrthoDB" id="5402974at2759"/>
<dbReference type="PhylomeDB" id="Q0WP36"/>
<dbReference type="PRO" id="PR:Q0WP36"/>
<dbReference type="Proteomes" id="UP000006548">
    <property type="component" value="Chromosome 1"/>
</dbReference>
<dbReference type="ExpressionAtlas" id="Q0WP36">
    <property type="expression patterns" value="baseline and differential"/>
</dbReference>
<dbReference type="GO" id="GO:0005739">
    <property type="term" value="C:mitochondrion"/>
    <property type="evidence" value="ECO:0007005"/>
    <property type="project" value="TAIR"/>
</dbReference>
<dbReference type="GO" id="GO:0000325">
    <property type="term" value="C:plant-type vacuole"/>
    <property type="evidence" value="ECO:0007005"/>
    <property type="project" value="TAIR"/>
</dbReference>
<dbReference type="GO" id="GO:0009705">
    <property type="term" value="C:plant-type vacuole membrane"/>
    <property type="evidence" value="ECO:0000314"/>
    <property type="project" value="TAIR"/>
</dbReference>
<dbReference type="GO" id="GO:0015098">
    <property type="term" value="F:molybdate ion transmembrane transporter activity"/>
    <property type="evidence" value="ECO:0000315"/>
    <property type="project" value="TAIR"/>
</dbReference>
<dbReference type="GO" id="GO:0090414">
    <property type="term" value="P:molybdate ion export from vacuole"/>
    <property type="evidence" value="ECO:0000315"/>
    <property type="project" value="TAIR"/>
</dbReference>
<dbReference type="GO" id="GO:0015689">
    <property type="term" value="P:molybdate ion transport"/>
    <property type="evidence" value="ECO:0000315"/>
    <property type="project" value="TAIR"/>
</dbReference>
<dbReference type="InterPro" id="IPR031563">
    <property type="entry name" value="MOT1/MOT2"/>
</dbReference>
<dbReference type="PANTHER" id="PTHR31970">
    <property type="match status" value="1"/>
</dbReference>
<dbReference type="PANTHER" id="PTHR31970:SF9">
    <property type="entry name" value="MOLYBDATE TRANSPORTER 2"/>
    <property type="match status" value="1"/>
</dbReference>
<dbReference type="Pfam" id="PF16983">
    <property type="entry name" value="MFS_MOT1"/>
    <property type="match status" value="2"/>
</dbReference>
<gene>
    <name type="primary">MOT2</name>
    <name type="synonym">ST5.1</name>
    <name type="synonym">SULTR5.1</name>
    <name type="ordered locus">At1g80310</name>
    <name type="ORF">F5I6.6</name>
</gene>
<evidence type="ECO:0000255" key="1"/>
<evidence type="ECO:0000269" key="2">
    <source>
    </source>
</evidence>
<evidence type="ECO:0000269" key="3">
    <source>
    </source>
</evidence>
<evidence type="ECO:0000303" key="4">
    <source>
    </source>
</evidence>
<evidence type="ECO:0000305" key="5"/>
<keyword id="KW-0025">Alternative splicing</keyword>
<keyword id="KW-0472">Membrane</keyword>
<keyword id="KW-0500">Molybdenum</keyword>
<keyword id="KW-1185">Reference proteome</keyword>
<keyword id="KW-0812">Transmembrane</keyword>
<keyword id="KW-1133">Transmembrane helix</keyword>
<keyword id="KW-0813">Transport</keyword>
<keyword id="KW-0926">Vacuole</keyword>